<name>TTCA_ACIB5</name>
<organism>
    <name type="scientific">Acinetobacter baumannii (strain AB0057)</name>
    <dbReference type="NCBI Taxonomy" id="480119"/>
    <lineage>
        <taxon>Bacteria</taxon>
        <taxon>Pseudomonadati</taxon>
        <taxon>Pseudomonadota</taxon>
        <taxon>Gammaproteobacteria</taxon>
        <taxon>Moraxellales</taxon>
        <taxon>Moraxellaceae</taxon>
        <taxon>Acinetobacter</taxon>
        <taxon>Acinetobacter calcoaceticus/baumannii complex</taxon>
    </lineage>
</organism>
<dbReference type="EC" id="2.8.1.-" evidence="1"/>
<dbReference type="EMBL" id="CP001182">
    <property type="protein sequence ID" value="ACJ42403.1"/>
    <property type="molecule type" value="Genomic_DNA"/>
</dbReference>
<dbReference type="RefSeq" id="WP_000271249.1">
    <property type="nucleotide sequence ID" value="NC_011586.2"/>
</dbReference>
<dbReference type="SMR" id="B7I610"/>
<dbReference type="KEGG" id="abn:AB57_3071"/>
<dbReference type="HOGENOM" id="CLU_026481_0_0_6"/>
<dbReference type="Proteomes" id="UP000007094">
    <property type="component" value="Chromosome"/>
</dbReference>
<dbReference type="GO" id="GO:0005737">
    <property type="term" value="C:cytoplasm"/>
    <property type="evidence" value="ECO:0007669"/>
    <property type="project" value="UniProtKB-SubCell"/>
</dbReference>
<dbReference type="GO" id="GO:0051539">
    <property type="term" value="F:4 iron, 4 sulfur cluster binding"/>
    <property type="evidence" value="ECO:0007669"/>
    <property type="project" value="UniProtKB-UniRule"/>
</dbReference>
<dbReference type="GO" id="GO:0005524">
    <property type="term" value="F:ATP binding"/>
    <property type="evidence" value="ECO:0007669"/>
    <property type="project" value="UniProtKB-UniRule"/>
</dbReference>
<dbReference type="GO" id="GO:0000287">
    <property type="term" value="F:magnesium ion binding"/>
    <property type="evidence" value="ECO:0007669"/>
    <property type="project" value="UniProtKB-UniRule"/>
</dbReference>
<dbReference type="GO" id="GO:0016783">
    <property type="term" value="F:sulfurtransferase activity"/>
    <property type="evidence" value="ECO:0007669"/>
    <property type="project" value="UniProtKB-UniRule"/>
</dbReference>
<dbReference type="GO" id="GO:0000049">
    <property type="term" value="F:tRNA binding"/>
    <property type="evidence" value="ECO:0007669"/>
    <property type="project" value="UniProtKB-KW"/>
</dbReference>
<dbReference type="GO" id="GO:0034227">
    <property type="term" value="P:tRNA thio-modification"/>
    <property type="evidence" value="ECO:0007669"/>
    <property type="project" value="UniProtKB-UniRule"/>
</dbReference>
<dbReference type="CDD" id="cd24138">
    <property type="entry name" value="TtcA-like"/>
    <property type="match status" value="1"/>
</dbReference>
<dbReference type="Gene3D" id="3.40.50.620">
    <property type="entry name" value="HUPs"/>
    <property type="match status" value="1"/>
</dbReference>
<dbReference type="HAMAP" id="MF_01850">
    <property type="entry name" value="TtcA"/>
    <property type="match status" value="1"/>
</dbReference>
<dbReference type="InterPro" id="IPR014729">
    <property type="entry name" value="Rossmann-like_a/b/a_fold"/>
</dbReference>
<dbReference type="InterPro" id="IPR011063">
    <property type="entry name" value="TilS/TtcA_N"/>
</dbReference>
<dbReference type="InterPro" id="IPR012089">
    <property type="entry name" value="tRNA_Cyd_32_2_STrfase"/>
</dbReference>
<dbReference type="InterPro" id="IPR035107">
    <property type="entry name" value="tRNA_thiolation_TtcA_Ctu1"/>
</dbReference>
<dbReference type="NCBIfam" id="NF007972">
    <property type="entry name" value="PRK10696.1"/>
    <property type="match status" value="1"/>
</dbReference>
<dbReference type="PANTHER" id="PTHR43686:SF1">
    <property type="entry name" value="AMINOTRAN_5 DOMAIN-CONTAINING PROTEIN"/>
    <property type="match status" value="1"/>
</dbReference>
<dbReference type="PANTHER" id="PTHR43686">
    <property type="entry name" value="SULFURTRANSFERASE-RELATED"/>
    <property type="match status" value="1"/>
</dbReference>
<dbReference type="Pfam" id="PF01171">
    <property type="entry name" value="ATP_bind_3"/>
    <property type="match status" value="1"/>
</dbReference>
<dbReference type="PIRSF" id="PIRSF004976">
    <property type="entry name" value="ATPase_YdaO"/>
    <property type="match status" value="1"/>
</dbReference>
<dbReference type="SUPFAM" id="SSF52402">
    <property type="entry name" value="Adenine nucleotide alpha hydrolases-like"/>
    <property type="match status" value="1"/>
</dbReference>
<accession>B7I610</accession>
<comment type="function">
    <text evidence="1">Catalyzes the ATP-dependent 2-thiolation of cytidine in position 32 of tRNA, to form 2-thiocytidine (s(2)C32). The sulfur atoms are provided by the cysteine/cysteine desulfurase (IscS) system.</text>
</comment>
<comment type="catalytic activity">
    <reaction evidence="1">
        <text>cytidine(32) in tRNA + S-sulfanyl-L-cysteinyl-[cysteine desulfurase] + AH2 + ATP = 2-thiocytidine(32) in tRNA + L-cysteinyl-[cysteine desulfurase] + A + AMP + diphosphate + H(+)</text>
        <dbReference type="Rhea" id="RHEA:57048"/>
        <dbReference type="Rhea" id="RHEA-COMP:10288"/>
        <dbReference type="Rhea" id="RHEA-COMP:12157"/>
        <dbReference type="Rhea" id="RHEA-COMP:12158"/>
        <dbReference type="Rhea" id="RHEA-COMP:14821"/>
        <dbReference type="ChEBI" id="CHEBI:13193"/>
        <dbReference type="ChEBI" id="CHEBI:15378"/>
        <dbReference type="ChEBI" id="CHEBI:17499"/>
        <dbReference type="ChEBI" id="CHEBI:29950"/>
        <dbReference type="ChEBI" id="CHEBI:30616"/>
        <dbReference type="ChEBI" id="CHEBI:33019"/>
        <dbReference type="ChEBI" id="CHEBI:61963"/>
        <dbReference type="ChEBI" id="CHEBI:82748"/>
        <dbReference type="ChEBI" id="CHEBI:141453"/>
        <dbReference type="ChEBI" id="CHEBI:456215"/>
    </reaction>
    <physiologicalReaction direction="left-to-right" evidence="1">
        <dbReference type="Rhea" id="RHEA:57049"/>
    </physiologicalReaction>
</comment>
<comment type="cofactor">
    <cofactor evidence="1">
        <name>Mg(2+)</name>
        <dbReference type="ChEBI" id="CHEBI:18420"/>
    </cofactor>
</comment>
<comment type="cofactor">
    <cofactor evidence="1">
        <name>[4Fe-4S] cluster</name>
        <dbReference type="ChEBI" id="CHEBI:49883"/>
    </cofactor>
    <text evidence="1">Binds 1 [4Fe-4S] cluster per subunit. The cluster is chelated by three Cys residues, the fourth Fe has a free coordination site that may bind a sulfur atom transferred from the persulfide of IscS.</text>
</comment>
<comment type="pathway">
    <text evidence="1">tRNA modification.</text>
</comment>
<comment type="subunit">
    <text evidence="1">Homodimer.</text>
</comment>
<comment type="subcellular location">
    <subcellularLocation>
        <location evidence="1">Cytoplasm</location>
    </subcellularLocation>
</comment>
<comment type="miscellaneous">
    <text evidence="1">The thiolation reaction likely consists of two steps: a first activation step by ATP to form an adenylated intermediate of the target base of tRNA, and a second nucleophilic substitution step of the sulfur (S) atom supplied by the hydrosulfide attached to the Fe-S cluster.</text>
</comment>
<comment type="similarity">
    <text evidence="1">Belongs to the TtcA family.</text>
</comment>
<gene>
    <name evidence="1" type="primary">ttcA</name>
    <name type="ordered locus">AB57_3071</name>
</gene>
<keyword id="KW-0004">4Fe-4S</keyword>
<keyword id="KW-0067">ATP-binding</keyword>
<keyword id="KW-0963">Cytoplasm</keyword>
<keyword id="KW-0408">Iron</keyword>
<keyword id="KW-0411">Iron-sulfur</keyword>
<keyword id="KW-0460">Magnesium</keyword>
<keyword id="KW-0479">Metal-binding</keyword>
<keyword id="KW-0547">Nucleotide-binding</keyword>
<keyword id="KW-0694">RNA-binding</keyword>
<keyword id="KW-0808">Transferase</keyword>
<keyword id="KW-0819">tRNA processing</keyword>
<keyword id="KW-0820">tRNA-binding</keyword>
<protein>
    <recommendedName>
        <fullName evidence="1">tRNA-cytidine(32) 2-sulfurtransferase</fullName>
        <ecNumber evidence="1">2.8.1.-</ecNumber>
    </recommendedName>
    <alternativeName>
        <fullName evidence="1">Two-thiocytidine biosynthesis protein A</fullName>
    </alternativeName>
    <alternativeName>
        <fullName evidence="1">tRNA 2-thiocytidine biosynthesis protein TtcA</fullName>
    </alternativeName>
</protein>
<sequence>MYAPVESNEGFNFKPELPTSSAYYRLLKKLRRQVGHAIRDFNMIEDGDKVMVCVSGGKDSYTLLDILLQFKRIAPINFDIVAVNLDQKQPGFPEDVLPRYMEENNIPYYILEKDTYSITKRLTPEGKTYCAVCSRLRRGSLYGFAQEIGATKVALGHHRDDIIATFFLNLFHGGSLKAMPPKLLSSDKKNILIRPLAYVEEKDIIKYAELRKFPIIPCNLCGSQENLQRAMINEMLREWDKQYPKRLHSIFGALQNVSPSQLADRDLFDFEVLDSQRELDFKDPEELKKRLDVVNLSFAAE</sequence>
<evidence type="ECO:0000255" key="1">
    <source>
        <dbReference type="HAMAP-Rule" id="MF_01850"/>
    </source>
</evidence>
<feature type="chain" id="PRO_1000188621" description="tRNA-cytidine(32) 2-sulfurtransferase">
    <location>
        <begin position="1"/>
        <end position="301"/>
    </location>
</feature>
<feature type="short sequence motif" description="PP-loop motif" evidence="1">
    <location>
        <begin position="55"/>
        <end position="60"/>
    </location>
</feature>
<feature type="binding site" evidence="1">
    <location>
        <position position="130"/>
    </location>
    <ligand>
        <name>[4Fe-4S] cluster</name>
        <dbReference type="ChEBI" id="CHEBI:49883"/>
    </ligand>
</feature>
<feature type="binding site" evidence="1">
    <location>
        <position position="133"/>
    </location>
    <ligand>
        <name>[4Fe-4S] cluster</name>
        <dbReference type="ChEBI" id="CHEBI:49883"/>
    </ligand>
</feature>
<feature type="binding site" evidence="1">
    <location>
        <position position="221"/>
    </location>
    <ligand>
        <name>[4Fe-4S] cluster</name>
        <dbReference type="ChEBI" id="CHEBI:49883"/>
    </ligand>
</feature>
<reference key="1">
    <citation type="journal article" date="2008" name="J. Bacteriol.">
        <title>Comparative genome sequence analysis of multidrug-resistant Acinetobacter baumannii.</title>
        <authorList>
            <person name="Adams M.D."/>
            <person name="Goglin K."/>
            <person name="Molyneaux N."/>
            <person name="Hujer K.M."/>
            <person name="Lavender H."/>
            <person name="Jamison J.J."/>
            <person name="MacDonald I.J."/>
            <person name="Martin K.M."/>
            <person name="Russo T."/>
            <person name="Campagnari A.A."/>
            <person name="Hujer A.M."/>
            <person name="Bonomo R.A."/>
            <person name="Gill S.R."/>
        </authorList>
    </citation>
    <scope>NUCLEOTIDE SEQUENCE [LARGE SCALE GENOMIC DNA]</scope>
    <source>
        <strain>AB0057</strain>
    </source>
</reference>
<proteinExistence type="inferred from homology"/>